<dbReference type="EC" id="2.7.1.33" evidence="1"/>
<dbReference type="EMBL" id="BX571659">
    <property type="protein sequence ID" value="CAE09916.1"/>
    <property type="molecule type" value="Genomic_DNA"/>
</dbReference>
<dbReference type="RefSeq" id="WP_011138713.1">
    <property type="nucleotide sequence ID" value="NC_005090.1"/>
</dbReference>
<dbReference type="SMR" id="Q7MS38"/>
<dbReference type="STRING" id="273121.WS0803"/>
<dbReference type="KEGG" id="wsu:WS0803"/>
<dbReference type="eggNOG" id="COG1521">
    <property type="taxonomic scope" value="Bacteria"/>
</dbReference>
<dbReference type="HOGENOM" id="CLU_1213471_0_0_7"/>
<dbReference type="UniPathway" id="UPA00241">
    <property type="reaction ID" value="UER00352"/>
</dbReference>
<dbReference type="Proteomes" id="UP000000422">
    <property type="component" value="Chromosome"/>
</dbReference>
<dbReference type="GO" id="GO:0005737">
    <property type="term" value="C:cytoplasm"/>
    <property type="evidence" value="ECO:0007669"/>
    <property type="project" value="UniProtKB-SubCell"/>
</dbReference>
<dbReference type="GO" id="GO:0005524">
    <property type="term" value="F:ATP binding"/>
    <property type="evidence" value="ECO:0007669"/>
    <property type="project" value="UniProtKB-UniRule"/>
</dbReference>
<dbReference type="GO" id="GO:0046872">
    <property type="term" value="F:metal ion binding"/>
    <property type="evidence" value="ECO:0007669"/>
    <property type="project" value="UniProtKB-KW"/>
</dbReference>
<dbReference type="GO" id="GO:0004594">
    <property type="term" value="F:pantothenate kinase activity"/>
    <property type="evidence" value="ECO:0007669"/>
    <property type="project" value="UniProtKB-UniRule"/>
</dbReference>
<dbReference type="GO" id="GO:0015937">
    <property type="term" value="P:coenzyme A biosynthetic process"/>
    <property type="evidence" value="ECO:0007669"/>
    <property type="project" value="UniProtKB-UniRule"/>
</dbReference>
<dbReference type="CDD" id="cd24015">
    <property type="entry name" value="ASKHA_NBD_PanK-III"/>
    <property type="match status" value="1"/>
</dbReference>
<dbReference type="Gene3D" id="3.30.420.40">
    <property type="match status" value="2"/>
</dbReference>
<dbReference type="HAMAP" id="MF_01274">
    <property type="entry name" value="Pantothen_kinase_3"/>
    <property type="match status" value="1"/>
</dbReference>
<dbReference type="InterPro" id="IPR043129">
    <property type="entry name" value="ATPase_NBD"/>
</dbReference>
<dbReference type="InterPro" id="IPR004619">
    <property type="entry name" value="Type_III_PanK"/>
</dbReference>
<dbReference type="NCBIfam" id="TIGR00671">
    <property type="entry name" value="baf"/>
    <property type="match status" value="1"/>
</dbReference>
<dbReference type="NCBIfam" id="NF009872">
    <property type="entry name" value="PRK13333.1"/>
    <property type="match status" value="1"/>
</dbReference>
<dbReference type="PANTHER" id="PTHR34265">
    <property type="entry name" value="TYPE III PANTOTHENATE KINASE"/>
    <property type="match status" value="1"/>
</dbReference>
<dbReference type="PANTHER" id="PTHR34265:SF1">
    <property type="entry name" value="TYPE III PANTOTHENATE KINASE"/>
    <property type="match status" value="1"/>
</dbReference>
<dbReference type="Pfam" id="PF03309">
    <property type="entry name" value="Pan_kinase"/>
    <property type="match status" value="1"/>
</dbReference>
<dbReference type="SUPFAM" id="SSF53067">
    <property type="entry name" value="Actin-like ATPase domain"/>
    <property type="match status" value="2"/>
</dbReference>
<evidence type="ECO:0000255" key="1">
    <source>
        <dbReference type="HAMAP-Rule" id="MF_01274"/>
    </source>
</evidence>
<reference key="1">
    <citation type="journal article" date="2003" name="Proc. Natl. Acad. Sci. U.S.A.">
        <title>Complete genome sequence and analysis of Wolinella succinogenes.</title>
        <authorList>
            <person name="Baar C."/>
            <person name="Eppinger M."/>
            <person name="Raddatz G."/>
            <person name="Simon J."/>
            <person name="Lanz C."/>
            <person name="Klimmek O."/>
            <person name="Nandakumar R."/>
            <person name="Gross R."/>
            <person name="Rosinus A."/>
            <person name="Keller H."/>
            <person name="Jagtap P."/>
            <person name="Linke B."/>
            <person name="Meyer F."/>
            <person name="Lederer H."/>
            <person name="Schuster S.C."/>
        </authorList>
    </citation>
    <scope>NUCLEOTIDE SEQUENCE [LARGE SCALE GENOMIC DNA]</scope>
    <source>
        <strain>ATCC 29543 / DSM 1740 / CCUG 13145 / JCM 31913 / LMG 7466 / NCTC 11488 / FDC 602W</strain>
    </source>
</reference>
<accession>Q7MS38</accession>
<gene>
    <name evidence="1" type="primary">coaX</name>
    <name type="ordered locus">WS0803</name>
</gene>
<protein>
    <recommendedName>
        <fullName evidence="1">Type III pantothenate kinase</fullName>
        <ecNumber evidence="1">2.7.1.33</ecNumber>
    </recommendedName>
    <alternativeName>
        <fullName evidence="1">PanK-III</fullName>
    </alternativeName>
    <alternativeName>
        <fullName evidence="1">Pantothenic acid kinase</fullName>
    </alternativeName>
</protein>
<sequence>MLLCDIGNTYLHFYQEGKVWKELPRRLKAGMEVQEVYYISVNPPSARRLLEVYPHAIDLAPHMVLDTAYKGLGVDRMAACKGIEDGVVVDAGSAITVDVMQNQVHLGGFIMPGIASFSSMLKSISPALEKELNLSVELSALPQNTRDALSYGAIKAIVMMIQNSCKNKRLFFTGGDGKYLARFFENAIHDNSIVFKGMLKTLEEMKEGKR</sequence>
<name>COAX_WOLSU</name>
<keyword id="KW-0067">ATP-binding</keyword>
<keyword id="KW-0173">Coenzyme A biosynthesis</keyword>
<keyword id="KW-0963">Cytoplasm</keyword>
<keyword id="KW-0418">Kinase</keyword>
<keyword id="KW-0479">Metal-binding</keyword>
<keyword id="KW-0547">Nucleotide-binding</keyword>
<keyword id="KW-0630">Potassium</keyword>
<keyword id="KW-1185">Reference proteome</keyword>
<keyword id="KW-0808">Transferase</keyword>
<organism>
    <name type="scientific">Wolinella succinogenes (strain ATCC 29543 / DSM 1740 / CCUG 13145 / JCM 31913 / LMG 7466 / NCTC 11488 / FDC 602W)</name>
    <name type="common">Vibrio succinogenes</name>
    <dbReference type="NCBI Taxonomy" id="273121"/>
    <lineage>
        <taxon>Bacteria</taxon>
        <taxon>Pseudomonadati</taxon>
        <taxon>Campylobacterota</taxon>
        <taxon>Epsilonproteobacteria</taxon>
        <taxon>Campylobacterales</taxon>
        <taxon>Helicobacteraceae</taxon>
        <taxon>Wolinella</taxon>
    </lineage>
</organism>
<feature type="chain" id="PRO_0000267603" description="Type III pantothenate kinase">
    <location>
        <begin position="1"/>
        <end position="210"/>
    </location>
</feature>
<feature type="active site" description="Proton acceptor" evidence="1">
    <location>
        <position position="75"/>
    </location>
</feature>
<feature type="binding site" evidence="1">
    <location>
        <begin position="5"/>
        <end position="12"/>
    </location>
    <ligand>
        <name>ATP</name>
        <dbReference type="ChEBI" id="CHEBI:30616"/>
    </ligand>
</feature>
<feature type="binding site" evidence="1">
    <location>
        <position position="69"/>
    </location>
    <ligand>
        <name>substrate</name>
    </ligand>
</feature>
<feature type="binding site" evidence="1">
    <location>
        <begin position="73"/>
        <end position="76"/>
    </location>
    <ligand>
        <name>substrate</name>
    </ligand>
</feature>
<feature type="binding site" evidence="1">
    <location>
        <position position="90"/>
    </location>
    <ligand>
        <name>K(+)</name>
        <dbReference type="ChEBI" id="CHEBI:29103"/>
    </ligand>
</feature>
<feature type="binding site" evidence="1">
    <location>
        <position position="93"/>
    </location>
    <ligand>
        <name>ATP</name>
        <dbReference type="ChEBI" id="CHEBI:30616"/>
    </ligand>
</feature>
<feature type="binding site" evidence="1">
    <location>
        <position position="145"/>
    </location>
    <ligand>
        <name>substrate</name>
    </ligand>
</feature>
<proteinExistence type="inferred from homology"/>
<comment type="function">
    <text evidence="1">Catalyzes the phosphorylation of pantothenate (Pan), the first step in CoA biosynthesis.</text>
</comment>
<comment type="catalytic activity">
    <reaction evidence="1">
        <text>(R)-pantothenate + ATP = (R)-4'-phosphopantothenate + ADP + H(+)</text>
        <dbReference type="Rhea" id="RHEA:16373"/>
        <dbReference type="ChEBI" id="CHEBI:10986"/>
        <dbReference type="ChEBI" id="CHEBI:15378"/>
        <dbReference type="ChEBI" id="CHEBI:29032"/>
        <dbReference type="ChEBI" id="CHEBI:30616"/>
        <dbReference type="ChEBI" id="CHEBI:456216"/>
        <dbReference type="EC" id="2.7.1.33"/>
    </reaction>
</comment>
<comment type="cofactor">
    <cofactor evidence="1">
        <name>NH4(+)</name>
        <dbReference type="ChEBI" id="CHEBI:28938"/>
    </cofactor>
    <cofactor evidence="1">
        <name>K(+)</name>
        <dbReference type="ChEBI" id="CHEBI:29103"/>
    </cofactor>
    <text evidence="1">A monovalent cation. Ammonium or potassium.</text>
</comment>
<comment type="pathway">
    <text evidence="1">Cofactor biosynthesis; coenzyme A biosynthesis; CoA from (R)-pantothenate: step 1/5.</text>
</comment>
<comment type="subunit">
    <text evidence="1">Homodimer.</text>
</comment>
<comment type="subcellular location">
    <subcellularLocation>
        <location evidence="1">Cytoplasm</location>
    </subcellularLocation>
</comment>
<comment type="similarity">
    <text evidence="1">Belongs to the type III pantothenate kinase family.</text>
</comment>